<sequence length="121" mass="13510">MARVTIEDCLKEVDSRFTLVHLAVRRVLQLRGGAPPLTEVRNKEVVLALREIAAGKVTVDNIRRLEEAKALPEPVAVTQKEDVARLELKEIMDEATLYDASMEFDEAQQVVEPDAEPSEEG</sequence>
<feature type="chain" id="PRO_1000006030" description="DNA-directed RNA polymerase subunit omega">
    <location>
        <begin position="1"/>
        <end position="121"/>
    </location>
</feature>
<gene>
    <name evidence="1" type="primary">rpoZ</name>
    <name type="ordered locus">Sfum_1758</name>
</gene>
<proteinExistence type="inferred from homology"/>
<organism>
    <name type="scientific">Syntrophobacter fumaroxidans (strain DSM 10017 / MPOB)</name>
    <dbReference type="NCBI Taxonomy" id="335543"/>
    <lineage>
        <taxon>Bacteria</taxon>
        <taxon>Pseudomonadati</taxon>
        <taxon>Thermodesulfobacteriota</taxon>
        <taxon>Syntrophobacteria</taxon>
        <taxon>Syntrophobacterales</taxon>
        <taxon>Syntrophobacteraceae</taxon>
        <taxon>Syntrophobacter</taxon>
    </lineage>
</organism>
<evidence type="ECO:0000255" key="1">
    <source>
        <dbReference type="HAMAP-Rule" id="MF_00366"/>
    </source>
</evidence>
<name>RPOZ_SYNFM</name>
<accession>A0LJ43</accession>
<keyword id="KW-0240">DNA-directed RNA polymerase</keyword>
<keyword id="KW-0548">Nucleotidyltransferase</keyword>
<keyword id="KW-1185">Reference proteome</keyword>
<keyword id="KW-0804">Transcription</keyword>
<keyword id="KW-0808">Transferase</keyword>
<protein>
    <recommendedName>
        <fullName evidence="1">DNA-directed RNA polymerase subunit omega</fullName>
        <shortName evidence="1">RNAP omega subunit</shortName>
        <ecNumber evidence="1">2.7.7.6</ecNumber>
    </recommendedName>
    <alternativeName>
        <fullName evidence="1">RNA polymerase omega subunit</fullName>
    </alternativeName>
    <alternativeName>
        <fullName evidence="1">Transcriptase subunit omega</fullName>
    </alternativeName>
</protein>
<reference key="1">
    <citation type="submission" date="2006-10" db="EMBL/GenBank/DDBJ databases">
        <title>Complete sequence of Syntrophobacter fumaroxidans MPOB.</title>
        <authorList>
            <consortium name="US DOE Joint Genome Institute"/>
            <person name="Copeland A."/>
            <person name="Lucas S."/>
            <person name="Lapidus A."/>
            <person name="Barry K."/>
            <person name="Detter J.C."/>
            <person name="Glavina del Rio T."/>
            <person name="Hammon N."/>
            <person name="Israni S."/>
            <person name="Pitluck S."/>
            <person name="Goltsman E.G."/>
            <person name="Martinez M."/>
            <person name="Schmutz J."/>
            <person name="Larimer F."/>
            <person name="Land M."/>
            <person name="Hauser L."/>
            <person name="Kyrpides N."/>
            <person name="Kim E."/>
            <person name="Boone D.R."/>
            <person name="Brockman F."/>
            <person name="Culley D."/>
            <person name="Ferry J."/>
            <person name="Gunsalus R."/>
            <person name="McInerney M.J."/>
            <person name="Morrison M."/>
            <person name="Plugge C."/>
            <person name="Rohlin L."/>
            <person name="Scholten J."/>
            <person name="Sieber J."/>
            <person name="Stams A.J.M."/>
            <person name="Worm P."/>
            <person name="Henstra A.M."/>
            <person name="Richardson P."/>
        </authorList>
    </citation>
    <scope>NUCLEOTIDE SEQUENCE [LARGE SCALE GENOMIC DNA]</scope>
    <source>
        <strain>DSM 10017 / MPOB</strain>
    </source>
</reference>
<comment type="function">
    <text evidence="1">Promotes RNA polymerase assembly. Latches the N- and C-terminal regions of the beta' subunit thereby facilitating its interaction with the beta and alpha subunits.</text>
</comment>
<comment type="catalytic activity">
    <reaction evidence="1">
        <text>RNA(n) + a ribonucleoside 5'-triphosphate = RNA(n+1) + diphosphate</text>
        <dbReference type="Rhea" id="RHEA:21248"/>
        <dbReference type="Rhea" id="RHEA-COMP:14527"/>
        <dbReference type="Rhea" id="RHEA-COMP:17342"/>
        <dbReference type="ChEBI" id="CHEBI:33019"/>
        <dbReference type="ChEBI" id="CHEBI:61557"/>
        <dbReference type="ChEBI" id="CHEBI:140395"/>
        <dbReference type="EC" id="2.7.7.6"/>
    </reaction>
</comment>
<comment type="subunit">
    <text evidence="1">The RNAP catalytic core consists of 2 alpha, 1 beta, 1 beta' and 1 omega subunit. When a sigma factor is associated with the core the holoenzyme is formed, which can initiate transcription.</text>
</comment>
<comment type="similarity">
    <text evidence="1">Belongs to the RNA polymerase subunit omega family.</text>
</comment>
<dbReference type="EC" id="2.7.7.6" evidence="1"/>
<dbReference type="EMBL" id="CP000478">
    <property type="protein sequence ID" value="ABK17445.1"/>
    <property type="molecule type" value="Genomic_DNA"/>
</dbReference>
<dbReference type="SMR" id="A0LJ43"/>
<dbReference type="STRING" id="335543.Sfum_1758"/>
<dbReference type="KEGG" id="sfu:Sfum_1758"/>
<dbReference type="eggNOG" id="COG1758">
    <property type="taxonomic scope" value="Bacteria"/>
</dbReference>
<dbReference type="HOGENOM" id="CLU_125406_5_3_7"/>
<dbReference type="InParanoid" id="A0LJ43"/>
<dbReference type="OrthoDB" id="9796300at2"/>
<dbReference type="Proteomes" id="UP000001784">
    <property type="component" value="Chromosome"/>
</dbReference>
<dbReference type="GO" id="GO:0000428">
    <property type="term" value="C:DNA-directed RNA polymerase complex"/>
    <property type="evidence" value="ECO:0007669"/>
    <property type="project" value="UniProtKB-KW"/>
</dbReference>
<dbReference type="GO" id="GO:0003677">
    <property type="term" value="F:DNA binding"/>
    <property type="evidence" value="ECO:0007669"/>
    <property type="project" value="UniProtKB-UniRule"/>
</dbReference>
<dbReference type="GO" id="GO:0003899">
    <property type="term" value="F:DNA-directed RNA polymerase activity"/>
    <property type="evidence" value="ECO:0007669"/>
    <property type="project" value="UniProtKB-UniRule"/>
</dbReference>
<dbReference type="GO" id="GO:0006351">
    <property type="term" value="P:DNA-templated transcription"/>
    <property type="evidence" value="ECO:0007669"/>
    <property type="project" value="UniProtKB-UniRule"/>
</dbReference>
<dbReference type="Gene3D" id="3.90.940.10">
    <property type="match status" value="1"/>
</dbReference>
<dbReference type="HAMAP" id="MF_00366">
    <property type="entry name" value="RNApol_bact_RpoZ"/>
    <property type="match status" value="1"/>
</dbReference>
<dbReference type="InterPro" id="IPR003716">
    <property type="entry name" value="DNA-dir_RNA_pol_omega"/>
</dbReference>
<dbReference type="InterPro" id="IPR006110">
    <property type="entry name" value="Pol_omega/Rpo6/RPB6"/>
</dbReference>
<dbReference type="InterPro" id="IPR036161">
    <property type="entry name" value="RPB6/omega-like_sf"/>
</dbReference>
<dbReference type="NCBIfam" id="TIGR00690">
    <property type="entry name" value="rpoZ"/>
    <property type="match status" value="1"/>
</dbReference>
<dbReference type="PANTHER" id="PTHR34476">
    <property type="entry name" value="DNA-DIRECTED RNA POLYMERASE SUBUNIT OMEGA"/>
    <property type="match status" value="1"/>
</dbReference>
<dbReference type="PANTHER" id="PTHR34476:SF1">
    <property type="entry name" value="DNA-DIRECTED RNA POLYMERASE SUBUNIT OMEGA"/>
    <property type="match status" value="1"/>
</dbReference>
<dbReference type="Pfam" id="PF01192">
    <property type="entry name" value="RNA_pol_Rpb6"/>
    <property type="match status" value="1"/>
</dbReference>
<dbReference type="SMART" id="SM01409">
    <property type="entry name" value="RNA_pol_Rpb6"/>
    <property type="match status" value="1"/>
</dbReference>
<dbReference type="SUPFAM" id="SSF63562">
    <property type="entry name" value="RPB6/omega subunit-like"/>
    <property type="match status" value="1"/>
</dbReference>